<organism>
    <name type="scientific">Clostridium perfringens (strain ATCC 13124 / DSM 756 / JCM 1290 / NCIMB 6125 / NCTC 8237 / Type A)</name>
    <dbReference type="NCBI Taxonomy" id="195103"/>
    <lineage>
        <taxon>Bacteria</taxon>
        <taxon>Bacillati</taxon>
        <taxon>Bacillota</taxon>
        <taxon>Clostridia</taxon>
        <taxon>Eubacteriales</taxon>
        <taxon>Clostridiaceae</taxon>
        <taxon>Clostridium</taxon>
    </lineage>
</organism>
<reference key="1">
    <citation type="journal article" date="2006" name="Genome Res.">
        <title>Skewed genomic variability in strains of the toxigenic bacterial pathogen, Clostridium perfringens.</title>
        <authorList>
            <person name="Myers G.S.A."/>
            <person name="Rasko D.A."/>
            <person name="Cheung J.K."/>
            <person name="Ravel J."/>
            <person name="Seshadri R."/>
            <person name="DeBoy R.T."/>
            <person name="Ren Q."/>
            <person name="Varga J."/>
            <person name="Awad M.M."/>
            <person name="Brinkac L.M."/>
            <person name="Daugherty S.C."/>
            <person name="Haft D.H."/>
            <person name="Dodson R.J."/>
            <person name="Madupu R."/>
            <person name="Nelson W.C."/>
            <person name="Rosovitz M.J."/>
            <person name="Sullivan S.A."/>
            <person name="Khouri H."/>
            <person name="Dimitrov G.I."/>
            <person name="Watkins K.L."/>
            <person name="Mulligan S."/>
            <person name="Benton J."/>
            <person name="Radune D."/>
            <person name="Fisher D.J."/>
            <person name="Atkins H.S."/>
            <person name="Hiscox T."/>
            <person name="Jost B.H."/>
            <person name="Billington S.J."/>
            <person name="Songer J.G."/>
            <person name="McClane B.A."/>
            <person name="Titball R.W."/>
            <person name="Rood J.I."/>
            <person name="Melville S.B."/>
            <person name="Paulsen I.T."/>
        </authorList>
    </citation>
    <scope>NUCLEOTIDE SEQUENCE [LARGE SCALE GENOMIC DNA]</scope>
    <source>
        <strain>ATCC 13124 / DSM 756 / JCM 1290 / NCIMB 6125 / NCTC 8237 / S 107 / Type A</strain>
    </source>
</reference>
<proteinExistence type="inferred from homology"/>
<sequence length="254" mass="29346">MIALLSPAKTLDLTKPNLDIETSKPIFISEAEVIMNNLKELEIQDLCPLMKISEDLGVQTFTKIQDWNTIYYGDEKPFVLSFKGEAYRGLDADDFTKEDLEFCNDSLRILSGLYGALKPLDGTKAYRLEMGTKISIDGSKNLYDFWGNKIMEAVLKDLENHKEKVIINLASNEYYKSIKKIEKKVRVITPVFKERKGIEYKVVTVYAKKARGQMVRYITKNRITKSEDIKNFDLDGYEFNERLSEGDTWVFTRD</sequence>
<protein>
    <recommendedName>
        <fullName evidence="1">UPF0246 protein CPF_2407</fullName>
    </recommendedName>
</protein>
<feature type="chain" id="PRO_0000262008" description="UPF0246 protein CPF_2407">
    <location>
        <begin position="1"/>
        <end position="254"/>
    </location>
</feature>
<name>Y2407_CLOP1</name>
<evidence type="ECO:0000255" key="1">
    <source>
        <dbReference type="HAMAP-Rule" id="MF_00652"/>
    </source>
</evidence>
<comment type="similarity">
    <text evidence="1">Belongs to the UPF0246 family.</text>
</comment>
<accession>Q0TNG0</accession>
<dbReference type="EMBL" id="CP000246">
    <property type="protein sequence ID" value="ABG85037.1"/>
    <property type="molecule type" value="Genomic_DNA"/>
</dbReference>
<dbReference type="SMR" id="Q0TNG0"/>
<dbReference type="STRING" id="195103.CPF_2407"/>
<dbReference type="PaxDb" id="195103-CPF_2407"/>
<dbReference type="KEGG" id="cpf:CPF_2407"/>
<dbReference type="eggNOG" id="COG3022">
    <property type="taxonomic scope" value="Bacteria"/>
</dbReference>
<dbReference type="HOGENOM" id="CLU_061989_0_0_9"/>
<dbReference type="Proteomes" id="UP000001823">
    <property type="component" value="Chromosome"/>
</dbReference>
<dbReference type="GO" id="GO:0005829">
    <property type="term" value="C:cytosol"/>
    <property type="evidence" value="ECO:0007669"/>
    <property type="project" value="TreeGrafter"/>
</dbReference>
<dbReference type="GO" id="GO:0033194">
    <property type="term" value="P:response to hydroperoxide"/>
    <property type="evidence" value="ECO:0007669"/>
    <property type="project" value="TreeGrafter"/>
</dbReference>
<dbReference type="HAMAP" id="MF_00652">
    <property type="entry name" value="UPF0246"/>
    <property type="match status" value="1"/>
</dbReference>
<dbReference type="InterPro" id="IPR005583">
    <property type="entry name" value="YaaA"/>
</dbReference>
<dbReference type="NCBIfam" id="NF002542">
    <property type="entry name" value="PRK02101.1-3"/>
    <property type="match status" value="1"/>
</dbReference>
<dbReference type="PANTHER" id="PTHR30283:SF4">
    <property type="entry name" value="PEROXIDE STRESS RESISTANCE PROTEIN YAAA"/>
    <property type="match status" value="1"/>
</dbReference>
<dbReference type="PANTHER" id="PTHR30283">
    <property type="entry name" value="PEROXIDE STRESS RESPONSE PROTEIN YAAA"/>
    <property type="match status" value="1"/>
</dbReference>
<dbReference type="Pfam" id="PF03883">
    <property type="entry name" value="H2O2_YaaD"/>
    <property type="match status" value="1"/>
</dbReference>
<gene>
    <name type="ordered locus">CPF_2407</name>
</gene>